<feature type="chain" id="PRO_1000087957" description="DNA ligase B">
    <location>
        <begin position="1"/>
        <end position="566"/>
    </location>
</feature>
<feature type="active site" description="N6-AMP-lysine intermediate" evidence="1">
    <location>
        <position position="125"/>
    </location>
</feature>
<keyword id="KW-0227">DNA damage</keyword>
<keyword id="KW-0234">DNA repair</keyword>
<keyword id="KW-0235">DNA replication</keyword>
<keyword id="KW-0436">Ligase</keyword>
<keyword id="KW-0520">NAD</keyword>
<protein>
    <recommendedName>
        <fullName evidence="1">DNA ligase B</fullName>
        <ecNumber evidence="1">6.5.1.2</ecNumber>
    </recommendedName>
    <alternativeName>
        <fullName evidence="1">Polydeoxyribonucleotide synthase [NAD(+)] B</fullName>
    </alternativeName>
</protein>
<evidence type="ECO:0000255" key="1">
    <source>
        <dbReference type="HAMAP-Rule" id="MF_01587"/>
    </source>
</evidence>
<reference key="1">
    <citation type="submission" date="2008-01" db="EMBL/GenBank/DDBJ databases">
        <title>Complete sequence of Pseudomonas putida GB-1.</title>
        <authorList>
            <consortium name="US DOE Joint Genome Institute"/>
            <person name="Copeland A."/>
            <person name="Lucas S."/>
            <person name="Lapidus A."/>
            <person name="Barry K."/>
            <person name="Glavina del Rio T."/>
            <person name="Dalin E."/>
            <person name="Tice H."/>
            <person name="Pitluck S."/>
            <person name="Bruce D."/>
            <person name="Goodwin L."/>
            <person name="Chertkov O."/>
            <person name="Brettin T."/>
            <person name="Detter J.C."/>
            <person name="Han C."/>
            <person name="Kuske C.R."/>
            <person name="Schmutz J."/>
            <person name="Larimer F."/>
            <person name="Land M."/>
            <person name="Hauser L."/>
            <person name="Kyrpides N."/>
            <person name="Kim E."/>
            <person name="McCarthy J.K."/>
            <person name="Richardson P."/>
        </authorList>
    </citation>
    <scope>NUCLEOTIDE SEQUENCE [LARGE SCALE GENOMIC DNA]</scope>
    <source>
        <strain>GB-1</strain>
    </source>
</reference>
<organism>
    <name type="scientific">Pseudomonas putida (strain GB-1)</name>
    <dbReference type="NCBI Taxonomy" id="76869"/>
    <lineage>
        <taxon>Bacteria</taxon>
        <taxon>Pseudomonadati</taxon>
        <taxon>Pseudomonadota</taxon>
        <taxon>Gammaproteobacteria</taxon>
        <taxon>Pseudomonadales</taxon>
        <taxon>Pseudomonadaceae</taxon>
        <taxon>Pseudomonas</taxon>
    </lineage>
</organism>
<accession>B0KLZ2</accession>
<sequence>MPYLLLFAMLFALNTPLAWAASCPDWTPQKAEAEAAQLQATLTGWDEHYHRQGIALVADELYDQSRQRLVHLQQCFGLAPSPSPLTSARGPLPHPVPHTGVDKLADRQAVARWMAGKTGVWVQPKFDGVAASLIYRQGQLVQLISRGDGLQGHDWSRHIPQLGAVTRQLPQAIDLHLQGELYLRLNEHVQAKAGSANARGTVAGLLARKQLTREQGNTIGLFVWGWPHGPERQADRLAQLAQLGFPDSQHYSIAVDTLEDAARWREHWYRSPLPFASDGVILRLGSRPPAERWQAKAPYWIAAWKYPYVQALAEVRDVRFRVGRTGRITPIAHVQPVTLDDRRITQVSLGSLARWQALDIRPGDQVAISLAGLTIPRLEHVVHRAVERQPLGAPAPGRHHALSCWQPSEGCEEQFIARLTWLSGKQGLALPRTGPGTWRRLVDAGLVTSMTDWLQLDAERLQQVPGISSLTAAQLLGSFDQARSRPFDQWLRGLGAPIGKHLQLTGGWQEMASRSAGQWQTVPDIGVKRSRQLVGFFAAAEVQAIATRLAESGIEGFSPPPERIEQ</sequence>
<name>LIGB_PSEPG</name>
<comment type="function">
    <text evidence="1">Catalyzes the formation of phosphodiester linkages between 5'-phosphoryl and 3'-hydroxyl groups in double-stranded DNA using NAD as a coenzyme and as the energy source for the reaction.</text>
</comment>
<comment type="catalytic activity">
    <reaction evidence="1">
        <text>NAD(+) + (deoxyribonucleotide)n-3'-hydroxyl + 5'-phospho-(deoxyribonucleotide)m = (deoxyribonucleotide)n+m + AMP + beta-nicotinamide D-nucleotide.</text>
        <dbReference type="EC" id="6.5.1.2"/>
    </reaction>
</comment>
<comment type="similarity">
    <text evidence="1">Belongs to the NAD-dependent DNA ligase family. LigB subfamily.</text>
</comment>
<proteinExistence type="inferred from homology"/>
<gene>
    <name evidence="1" type="primary">ligB</name>
    <name type="ordered locus">PputGB1_5017</name>
</gene>
<dbReference type="EC" id="6.5.1.2" evidence="1"/>
<dbReference type="EMBL" id="CP000926">
    <property type="protein sequence ID" value="ABZ00902.1"/>
    <property type="molecule type" value="Genomic_DNA"/>
</dbReference>
<dbReference type="RefSeq" id="WP_012274527.1">
    <property type="nucleotide sequence ID" value="NC_010322.1"/>
</dbReference>
<dbReference type="SMR" id="B0KLZ2"/>
<dbReference type="KEGG" id="ppg:PputGB1_5017"/>
<dbReference type="eggNOG" id="COG0272">
    <property type="taxonomic scope" value="Bacteria"/>
</dbReference>
<dbReference type="HOGENOM" id="CLU_489786_0_0_6"/>
<dbReference type="Proteomes" id="UP000002157">
    <property type="component" value="Chromosome"/>
</dbReference>
<dbReference type="GO" id="GO:0003911">
    <property type="term" value="F:DNA ligase (NAD+) activity"/>
    <property type="evidence" value="ECO:0007669"/>
    <property type="project" value="UniProtKB-UniRule"/>
</dbReference>
<dbReference type="GO" id="GO:0006281">
    <property type="term" value="P:DNA repair"/>
    <property type="evidence" value="ECO:0007669"/>
    <property type="project" value="UniProtKB-KW"/>
</dbReference>
<dbReference type="GO" id="GO:0006260">
    <property type="term" value="P:DNA replication"/>
    <property type="evidence" value="ECO:0007669"/>
    <property type="project" value="UniProtKB-KW"/>
</dbReference>
<dbReference type="Gene3D" id="1.10.150.20">
    <property type="entry name" value="5' to 3' exonuclease, C-terminal subdomain"/>
    <property type="match status" value="1"/>
</dbReference>
<dbReference type="Gene3D" id="3.30.470.30">
    <property type="entry name" value="DNA ligase/mRNA capping enzyme"/>
    <property type="match status" value="1"/>
</dbReference>
<dbReference type="Gene3D" id="1.10.287.610">
    <property type="entry name" value="Helix hairpin bin"/>
    <property type="match status" value="1"/>
</dbReference>
<dbReference type="Gene3D" id="2.40.50.140">
    <property type="entry name" value="Nucleic acid-binding proteins"/>
    <property type="match status" value="1"/>
</dbReference>
<dbReference type="HAMAP" id="MF_01587">
    <property type="entry name" value="DNA_ligase_B"/>
    <property type="match status" value="1"/>
</dbReference>
<dbReference type="InterPro" id="IPR001679">
    <property type="entry name" value="DNA_ligase"/>
</dbReference>
<dbReference type="InterPro" id="IPR020923">
    <property type="entry name" value="DNA_ligase_B"/>
</dbReference>
<dbReference type="InterPro" id="IPR013839">
    <property type="entry name" value="DNAligase_adenylation"/>
</dbReference>
<dbReference type="InterPro" id="IPR013840">
    <property type="entry name" value="DNAligase_N"/>
</dbReference>
<dbReference type="InterPro" id="IPR012340">
    <property type="entry name" value="NA-bd_OB-fold"/>
</dbReference>
<dbReference type="InterPro" id="IPR050326">
    <property type="entry name" value="NAD_dep_DNA_ligaseB"/>
</dbReference>
<dbReference type="InterPro" id="IPR004150">
    <property type="entry name" value="NAD_DNA_ligase_OB"/>
</dbReference>
<dbReference type="InterPro" id="IPR010994">
    <property type="entry name" value="RuvA_2-like"/>
</dbReference>
<dbReference type="NCBIfam" id="NF005987">
    <property type="entry name" value="PRK08097.1"/>
    <property type="match status" value="1"/>
</dbReference>
<dbReference type="PANTHER" id="PTHR47810">
    <property type="entry name" value="DNA LIGASE"/>
    <property type="match status" value="1"/>
</dbReference>
<dbReference type="PANTHER" id="PTHR47810:SF1">
    <property type="entry name" value="DNA LIGASE B"/>
    <property type="match status" value="1"/>
</dbReference>
<dbReference type="Pfam" id="PF01653">
    <property type="entry name" value="DNA_ligase_aden"/>
    <property type="match status" value="1"/>
</dbReference>
<dbReference type="Pfam" id="PF03120">
    <property type="entry name" value="DNA_ligase_OB"/>
    <property type="match status" value="1"/>
</dbReference>
<dbReference type="PIRSF" id="PIRSF001604">
    <property type="entry name" value="LigA"/>
    <property type="match status" value="1"/>
</dbReference>
<dbReference type="SMART" id="SM00532">
    <property type="entry name" value="LIGANc"/>
    <property type="match status" value="1"/>
</dbReference>
<dbReference type="SUPFAM" id="SSF56091">
    <property type="entry name" value="DNA ligase/mRNA capping enzyme, catalytic domain"/>
    <property type="match status" value="1"/>
</dbReference>
<dbReference type="SUPFAM" id="SSF50249">
    <property type="entry name" value="Nucleic acid-binding proteins"/>
    <property type="match status" value="1"/>
</dbReference>
<dbReference type="SUPFAM" id="SSF47781">
    <property type="entry name" value="RuvA domain 2-like"/>
    <property type="match status" value="1"/>
</dbReference>